<reference key="1">
    <citation type="submission" date="1998-05" db="EMBL/GenBank/DDBJ databases">
        <title>Human dendritic cell SUI1 homolog gene.</title>
        <authorList>
            <person name="Zhao Z."/>
            <person name="Huang X."/>
            <person name="Li N."/>
            <person name="Zhu X."/>
            <person name="Cao X."/>
        </authorList>
    </citation>
    <scope>NUCLEOTIDE SEQUENCE [MRNA]</scope>
    <source>
        <tissue>Blood</tissue>
    </source>
</reference>
<reference key="2">
    <citation type="journal article" date="2000" name="Proc. Natl. Acad. Sci. U.S.A.">
        <title>Gene expression profiling in the human hypothalamus-pituitary-adrenal axis and full-length cDNA cloning.</title>
        <authorList>
            <person name="Hu R.-M."/>
            <person name="Han Z.-G."/>
            <person name="Song H.-D."/>
            <person name="Peng Y.-D."/>
            <person name="Huang Q.-H."/>
            <person name="Ren S.-X."/>
            <person name="Gu Y.-J."/>
            <person name="Huang C.-H."/>
            <person name="Li Y.-B."/>
            <person name="Jiang C.-L."/>
            <person name="Fu G."/>
            <person name="Zhang Q.-H."/>
            <person name="Gu B.-W."/>
            <person name="Dai M."/>
            <person name="Mao Y.-F."/>
            <person name="Gao G.-F."/>
            <person name="Rong R."/>
            <person name="Ye M."/>
            <person name="Zhou J."/>
            <person name="Xu S.-H."/>
            <person name="Gu J."/>
            <person name="Shi J.-X."/>
            <person name="Jin W.-R."/>
            <person name="Zhang C.-K."/>
            <person name="Wu T.-M."/>
            <person name="Huang G.-Y."/>
            <person name="Chen Z."/>
            <person name="Chen M.-D."/>
            <person name="Chen J.-L."/>
        </authorList>
    </citation>
    <scope>NUCLEOTIDE SEQUENCE [LARGE SCALE MRNA]</scope>
    <source>
        <tissue>Pituitary</tissue>
    </source>
</reference>
<reference key="3">
    <citation type="submission" date="2000-05" db="EMBL/GenBank/DDBJ databases">
        <title>Homo sapiens translational factor eIF-1.</title>
        <authorList>
            <person name="Kim D.-G."/>
            <person name="You K.-R."/>
        </authorList>
    </citation>
    <scope>NUCLEOTIDE SEQUENCE [MRNA]</scope>
    <source>
        <tissue>Liver</tissue>
    </source>
</reference>
<reference key="4">
    <citation type="journal article" date="2004" name="Genome Res.">
        <title>The status, quality, and expansion of the NIH full-length cDNA project: the Mammalian Gene Collection (MGC).</title>
        <authorList>
            <consortium name="The MGC Project Team"/>
        </authorList>
    </citation>
    <scope>NUCLEOTIDE SEQUENCE [LARGE SCALE MRNA]</scope>
    <source>
        <tissue>Kidney</tissue>
    </source>
</reference>
<reference key="5">
    <citation type="journal article" date="2011" name="Sci. Signal.">
        <title>System-wide temporal characterization of the proteome and phosphoproteome of human embryonic stem cell differentiation.</title>
        <authorList>
            <person name="Rigbolt K.T."/>
            <person name="Prokhorova T.A."/>
            <person name="Akimov V."/>
            <person name="Henningsen J."/>
            <person name="Johansen P.T."/>
            <person name="Kratchmarova I."/>
            <person name="Kassem M."/>
            <person name="Mann M."/>
            <person name="Olsen J.V."/>
            <person name="Blagoev B."/>
        </authorList>
    </citation>
    <scope>ACETYLATION [LARGE SCALE ANALYSIS] AT SER-2</scope>
    <scope>PHOSPHORYLATION [LARGE SCALE ANALYSIS] AT SER-9</scope>
    <scope>CLEAVAGE OF INITIATOR METHIONINE [LARGE SCALE ANALYSIS]</scope>
    <scope>IDENTIFICATION BY MASS SPECTROMETRY [LARGE SCALE ANALYSIS]</scope>
</reference>
<reference key="6">
    <citation type="journal article" date="2013" name="J. Proteome Res.">
        <title>Toward a comprehensive characterization of a human cancer cell phosphoproteome.</title>
        <authorList>
            <person name="Zhou H."/>
            <person name="Di Palma S."/>
            <person name="Preisinger C."/>
            <person name="Peng M."/>
            <person name="Polat A.N."/>
            <person name="Heck A.J."/>
            <person name="Mohammed S."/>
        </authorList>
    </citation>
    <scope>PHOSPHORYLATION [LARGE SCALE ANALYSIS] AT SER-9</scope>
    <scope>IDENTIFICATION BY MASS SPECTROMETRY [LARGE SCALE ANALYSIS]</scope>
    <source>
        <tissue>Erythroleukemia</tissue>
    </source>
</reference>
<protein>
    <recommendedName>
        <fullName>Eukaryotic translation initiation factor 1b</fullName>
        <shortName>eIF1b</shortName>
    </recommendedName>
    <alternativeName>
        <fullName>Protein translation factor SUI1 homolog GC20</fullName>
    </alternativeName>
</protein>
<evidence type="ECO:0000305" key="1"/>
<evidence type="ECO:0007744" key="2">
    <source>
    </source>
</evidence>
<evidence type="ECO:0007744" key="3">
    <source>
    </source>
</evidence>
<keyword id="KW-0007">Acetylation</keyword>
<keyword id="KW-0396">Initiation factor</keyword>
<keyword id="KW-0597">Phosphoprotein</keyword>
<keyword id="KW-0648">Protein biosynthesis</keyword>
<keyword id="KW-1267">Proteomics identification</keyword>
<keyword id="KW-1185">Reference proteome</keyword>
<organism>
    <name type="scientific">Homo sapiens</name>
    <name type="common">Human</name>
    <dbReference type="NCBI Taxonomy" id="9606"/>
    <lineage>
        <taxon>Eukaryota</taxon>
        <taxon>Metazoa</taxon>
        <taxon>Chordata</taxon>
        <taxon>Craniata</taxon>
        <taxon>Vertebrata</taxon>
        <taxon>Euteleostomi</taxon>
        <taxon>Mammalia</taxon>
        <taxon>Eutheria</taxon>
        <taxon>Euarchontoglires</taxon>
        <taxon>Primates</taxon>
        <taxon>Haplorrhini</taxon>
        <taxon>Catarrhini</taxon>
        <taxon>Hominidae</taxon>
        <taxon>Homo</taxon>
    </lineage>
</organism>
<name>EIF1B_HUMAN</name>
<proteinExistence type="evidence at protein level"/>
<gene>
    <name type="primary">EIF1B</name>
</gene>
<dbReference type="EMBL" id="AF064607">
    <property type="protein sequence ID" value="AAC17112.1"/>
    <property type="molecule type" value="mRNA"/>
</dbReference>
<dbReference type="EMBL" id="AF077052">
    <property type="protein sequence ID" value="AAD27785.1"/>
    <property type="molecule type" value="mRNA"/>
</dbReference>
<dbReference type="EMBL" id="AF263452">
    <property type="protein sequence ID" value="AAF79182.1"/>
    <property type="molecule type" value="mRNA"/>
</dbReference>
<dbReference type="EMBL" id="BC006996">
    <property type="protein sequence ID" value="AAH06996.1"/>
    <property type="molecule type" value="mRNA"/>
</dbReference>
<dbReference type="CCDS" id="CCDS2690.1"/>
<dbReference type="RefSeq" id="NP_005866.1">
    <property type="nucleotide sequence ID" value="NM_005875.3"/>
</dbReference>
<dbReference type="SMR" id="O60739"/>
<dbReference type="BioGRID" id="115578">
    <property type="interactions" value="61"/>
</dbReference>
<dbReference type="FunCoup" id="O60739">
    <property type="interactions" value="568"/>
</dbReference>
<dbReference type="IntAct" id="O60739">
    <property type="interactions" value="19"/>
</dbReference>
<dbReference type="MINT" id="O60739"/>
<dbReference type="STRING" id="9606.ENSP00000232905"/>
<dbReference type="GlyGen" id="O60739">
    <property type="glycosylation" value="1 site, 1 O-linked glycan (1 site)"/>
</dbReference>
<dbReference type="iPTMnet" id="O60739"/>
<dbReference type="PhosphoSitePlus" id="O60739"/>
<dbReference type="SwissPalm" id="O60739"/>
<dbReference type="BioMuta" id="EIF1B"/>
<dbReference type="jPOST" id="O60739"/>
<dbReference type="MassIVE" id="O60739"/>
<dbReference type="PaxDb" id="9606-ENSP00000232905"/>
<dbReference type="PeptideAtlas" id="O60739"/>
<dbReference type="ProteomicsDB" id="49582"/>
<dbReference type="Pumba" id="O60739"/>
<dbReference type="TopDownProteomics" id="O60739"/>
<dbReference type="Antibodypedia" id="65170">
    <property type="antibodies" value="87 antibodies from 21 providers"/>
</dbReference>
<dbReference type="DNASU" id="10289"/>
<dbReference type="Ensembl" id="ENST00000232905.4">
    <property type="protein sequence ID" value="ENSP00000232905.3"/>
    <property type="gene ID" value="ENSG00000114784.4"/>
</dbReference>
<dbReference type="GeneID" id="10289"/>
<dbReference type="KEGG" id="hsa:10289"/>
<dbReference type="MANE-Select" id="ENST00000232905.4">
    <property type="protein sequence ID" value="ENSP00000232905.3"/>
    <property type="RefSeq nucleotide sequence ID" value="NM_005875.3"/>
    <property type="RefSeq protein sequence ID" value="NP_005866.1"/>
</dbReference>
<dbReference type="AGR" id="HGNC:30792"/>
<dbReference type="CTD" id="10289"/>
<dbReference type="GeneCards" id="EIF1B"/>
<dbReference type="HGNC" id="HGNC:30792">
    <property type="gene designation" value="EIF1B"/>
</dbReference>
<dbReference type="HPA" id="ENSG00000114784">
    <property type="expression patterns" value="Tissue enhanced (heart)"/>
</dbReference>
<dbReference type="neXtProt" id="NX_O60739"/>
<dbReference type="OpenTargets" id="ENSG00000114784"/>
<dbReference type="PharmGKB" id="PA143485452"/>
<dbReference type="VEuPathDB" id="HostDB:ENSG00000114784"/>
<dbReference type="eggNOG" id="KOG1770">
    <property type="taxonomic scope" value="Eukaryota"/>
</dbReference>
<dbReference type="GeneTree" id="ENSGT00940000160239"/>
<dbReference type="HOGENOM" id="CLU_082805_3_0_1"/>
<dbReference type="InParanoid" id="O60739"/>
<dbReference type="OMA" id="CEFMITQ"/>
<dbReference type="OrthoDB" id="10248435at2759"/>
<dbReference type="PAN-GO" id="O60739">
    <property type="GO annotations" value="4 GO annotations based on evolutionary models"/>
</dbReference>
<dbReference type="PhylomeDB" id="O60739"/>
<dbReference type="TreeFam" id="TF314417"/>
<dbReference type="PathwayCommons" id="O60739"/>
<dbReference type="SignaLink" id="O60739"/>
<dbReference type="SIGNOR" id="O60739"/>
<dbReference type="BioGRID-ORCS" id="10289">
    <property type="hits" value="17 hits in 1158 CRISPR screens"/>
</dbReference>
<dbReference type="CD-CODE" id="DEE660B4">
    <property type="entry name" value="Stress granule"/>
</dbReference>
<dbReference type="ChiTaRS" id="EIF1B">
    <property type="organism name" value="human"/>
</dbReference>
<dbReference type="GeneWiki" id="EIF1B"/>
<dbReference type="GenomeRNAi" id="10289"/>
<dbReference type="Pharos" id="O60739">
    <property type="development level" value="Tbio"/>
</dbReference>
<dbReference type="PRO" id="PR:O60739"/>
<dbReference type="Proteomes" id="UP000005640">
    <property type="component" value="Chromosome 3"/>
</dbReference>
<dbReference type="RNAct" id="O60739">
    <property type="molecule type" value="protein"/>
</dbReference>
<dbReference type="Bgee" id="ENSG00000114784">
    <property type="expression patterns" value="Expressed in heart right ventricle and 211 other cell types or tissues"/>
</dbReference>
<dbReference type="ExpressionAtlas" id="O60739">
    <property type="expression patterns" value="baseline and differential"/>
</dbReference>
<dbReference type="GO" id="GO:0016282">
    <property type="term" value="C:eukaryotic 43S preinitiation complex"/>
    <property type="evidence" value="ECO:0000318"/>
    <property type="project" value="GO_Central"/>
</dbReference>
<dbReference type="GO" id="GO:0043024">
    <property type="term" value="F:ribosomal small subunit binding"/>
    <property type="evidence" value="ECO:0000318"/>
    <property type="project" value="GO_Central"/>
</dbReference>
<dbReference type="GO" id="GO:0003723">
    <property type="term" value="F:RNA binding"/>
    <property type="evidence" value="ECO:0007005"/>
    <property type="project" value="UniProtKB"/>
</dbReference>
<dbReference type="GO" id="GO:0003743">
    <property type="term" value="F:translation initiation factor activity"/>
    <property type="evidence" value="ECO:0000318"/>
    <property type="project" value="GO_Central"/>
</dbReference>
<dbReference type="GO" id="GO:0006446">
    <property type="term" value="P:regulation of translational initiation"/>
    <property type="evidence" value="ECO:0000303"/>
    <property type="project" value="UniProtKB"/>
</dbReference>
<dbReference type="CDD" id="cd11566">
    <property type="entry name" value="eIF1_SUI1"/>
    <property type="match status" value="1"/>
</dbReference>
<dbReference type="FunFam" id="3.30.780.10:FF:000003">
    <property type="entry name" value="Eukaryotic translation initiation factor 1b"/>
    <property type="match status" value="1"/>
</dbReference>
<dbReference type="Gene3D" id="3.30.780.10">
    <property type="entry name" value="SUI1-like domain"/>
    <property type="match status" value="1"/>
</dbReference>
<dbReference type="InterPro" id="IPR001950">
    <property type="entry name" value="SUI1"/>
</dbReference>
<dbReference type="InterPro" id="IPR036877">
    <property type="entry name" value="SUI1_dom_sf"/>
</dbReference>
<dbReference type="InterPro" id="IPR005874">
    <property type="entry name" value="SUI1_euk"/>
</dbReference>
<dbReference type="NCBIfam" id="TIGR01160">
    <property type="entry name" value="SUI1_MOF2"/>
    <property type="match status" value="1"/>
</dbReference>
<dbReference type="PANTHER" id="PTHR10388">
    <property type="entry name" value="EUKARYOTIC TRANSLATION INITIATION FACTOR SUI1"/>
    <property type="match status" value="1"/>
</dbReference>
<dbReference type="Pfam" id="PF01253">
    <property type="entry name" value="SUI1"/>
    <property type="match status" value="1"/>
</dbReference>
<dbReference type="PIRSF" id="PIRSF004499">
    <property type="entry name" value="SUI1_euk"/>
    <property type="match status" value="1"/>
</dbReference>
<dbReference type="SUPFAM" id="SSF55159">
    <property type="entry name" value="eIF1-like"/>
    <property type="match status" value="1"/>
</dbReference>
<dbReference type="PROSITE" id="PS50296">
    <property type="entry name" value="SUI1"/>
    <property type="match status" value="1"/>
</dbReference>
<comment type="function">
    <text>Probably involved in translation.</text>
</comment>
<comment type="interaction">
    <interactant intactId="EBI-1043343">
        <id>O60739</id>
    </interactant>
    <interactant intactId="EBI-739789">
        <id>Q92997</id>
        <label>DVL3</label>
    </interactant>
    <organismsDiffer>false</organismsDiffer>
    <experiments>3</experiments>
</comment>
<comment type="interaction">
    <interactant intactId="EBI-1043343">
        <id>O60739</id>
    </interactant>
    <interactant intactId="EBI-400434">
        <id>P35637</id>
        <label>FUS</label>
    </interactant>
    <organismsDiffer>false</organismsDiffer>
    <experiments>3</experiments>
</comment>
<comment type="interaction">
    <interactant intactId="EBI-1043343">
        <id>O60739</id>
    </interactant>
    <interactant intactId="EBI-742688">
        <id>Q9NZD8</id>
        <label>SPG21</label>
    </interactant>
    <organismsDiffer>false</organismsDiffer>
    <experiments>3</experiments>
</comment>
<comment type="interaction">
    <interactant intactId="EBI-1043343">
        <id>O60739</id>
    </interactant>
    <interactant intactId="EBI-714860">
        <id>P09936</id>
        <label>UCHL1</label>
    </interactant>
    <organismsDiffer>false</organismsDiffer>
    <experiments>3</experiments>
</comment>
<comment type="similarity">
    <text evidence="1">Belongs to the SUI1 family.</text>
</comment>
<feature type="initiator methionine" description="Removed" evidence="2">
    <location>
        <position position="1"/>
    </location>
</feature>
<feature type="chain" id="PRO_0000130558" description="Eukaryotic translation initiation factor 1b">
    <location>
        <begin position="2"/>
        <end position="113"/>
    </location>
</feature>
<feature type="modified residue" description="N-acetylserine" evidence="2">
    <location>
        <position position="2"/>
    </location>
</feature>
<feature type="modified residue" description="Phosphoserine" evidence="2 3">
    <location>
        <position position="9"/>
    </location>
</feature>
<feature type="sequence conflict" description="In Ref. 1; AAC17112." evidence="1" ref="1">
    <original>T</original>
    <variation>L</variation>
    <location>
        <position position="27"/>
    </location>
</feature>
<feature type="sequence conflict" description="In Ref. 1; AAC17112." evidence="1" ref="1">
    <original>R</original>
    <variation>G</variation>
    <location>
        <position position="41"/>
    </location>
</feature>
<accession>O60739</accession>
<accession>Q9UQF8</accession>
<sequence>MSTIQNLQSFDPFADATKGDDLLPAGTEDYIHIRIQQRNGRKTLTTVQGIADDYDKKKLVKAFKKKFACNGTVIEHPEYGEVIQLQGDQRKNICQFLLEVGIVKEEQLKVHGF</sequence>